<comment type="function">
    <text evidence="1">Transfers a succinyl group from succinyl-CoA to L-homoserine, forming succinyl-L-homoserine.</text>
</comment>
<comment type="catalytic activity">
    <reaction evidence="1">
        <text>L-homoserine + succinyl-CoA = O-succinyl-L-homoserine + CoA</text>
        <dbReference type="Rhea" id="RHEA:22008"/>
        <dbReference type="ChEBI" id="CHEBI:57287"/>
        <dbReference type="ChEBI" id="CHEBI:57292"/>
        <dbReference type="ChEBI" id="CHEBI:57476"/>
        <dbReference type="ChEBI" id="CHEBI:57661"/>
        <dbReference type="EC" id="2.3.1.46"/>
    </reaction>
</comment>
<comment type="pathway">
    <text evidence="1">Amino-acid biosynthesis; L-methionine biosynthesis via de novo pathway; O-succinyl-L-homoserine from L-homoserine: step 1/1.</text>
</comment>
<comment type="subunit">
    <text evidence="1">Homodimer.</text>
</comment>
<comment type="subcellular location">
    <subcellularLocation>
        <location evidence="1">Cytoplasm</location>
    </subcellularLocation>
</comment>
<comment type="similarity">
    <text evidence="1">Belongs to the AB hydrolase superfamily. MetX family.</text>
</comment>
<organism>
    <name type="scientific">Cupriavidus metallidurans (strain ATCC 43123 / DSM 2839 / NBRC 102507 / CH34)</name>
    <name type="common">Ralstonia metallidurans</name>
    <dbReference type="NCBI Taxonomy" id="266264"/>
    <lineage>
        <taxon>Bacteria</taxon>
        <taxon>Pseudomonadati</taxon>
        <taxon>Pseudomonadota</taxon>
        <taxon>Betaproteobacteria</taxon>
        <taxon>Burkholderiales</taxon>
        <taxon>Burkholderiaceae</taxon>
        <taxon>Cupriavidus</taxon>
    </lineage>
</organism>
<accession>Q1LS47</accession>
<sequence>MTDVAPPAGVLDVPTDSVGVVTPQRMHFSEPLQLRNGSQIADYDLMVETYGTLNAARTNAVLVCHALNASHHVAGIAADNPRDIGWWDNMVGPGKPLDTNRFFVIGVNNLGSCFGSTGPMSTNPSTGAPYGALFPVVTVEDWVNAQARVADIFGIQQFAAVMGGSLGGMQALAWSLMYPERLRHCIVVASTPKLSAQNIAFNEVARSSILSDPDFHGGNYYAHNVKPKRGLRVARMIGHITYLSDEDMAEKFGRSLKAEDIRFSFDVEFQVESYLRYQGDKFAEYFDANTYLLITRALDYFDPALAHGGDLTRAMAQTQAGFLVVSFTTDWRFAPNRSREIVKALLDNKRPVSYAEIDAPHGHDAFLLDDARYHNLMRAYYDRIAEEIGA</sequence>
<proteinExistence type="inferred from homology"/>
<dbReference type="EC" id="2.3.1.46" evidence="1"/>
<dbReference type="EMBL" id="CP000352">
    <property type="protein sequence ID" value="ABF07029.1"/>
    <property type="molecule type" value="Genomic_DNA"/>
</dbReference>
<dbReference type="SMR" id="Q1LS47"/>
<dbReference type="STRING" id="266264.Rmet_0143"/>
<dbReference type="ESTHER" id="ralme-q1ls47">
    <property type="family name" value="Homoserine_transacetylase"/>
</dbReference>
<dbReference type="KEGG" id="rme:Rmet_0143"/>
<dbReference type="eggNOG" id="COG2021">
    <property type="taxonomic scope" value="Bacteria"/>
</dbReference>
<dbReference type="HOGENOM" id="CLU_028760_1_2_4"/>
<dbReference type="UniPathway" id="UPA00051">
    <property type="reaction ID" value="UER00075"/>
</dbReference>
<dbReference type="Proteomes" id="UP000002429">
    <property type="component" value="Chromosome"/>
</dbReference>
<dbReference type="GO" id="GO:0005737">
    <property type="term" value="C:cytoplasm"/>
    <property type="evidence" value="ECO:0007669"/>
    <property type="project" value="UniProtKB-SubCell"/>
</dbReference>
<dbReference type="GO" id="GO:0004414">
    <property type="term" value="F:homoserine O-acetyltransferase activity"/>
    <property type="evidence" value="ECO:0007669"/>
    <property type="project" value="TreeGrafter"/>
</dbReference>
<dbReference type="GO" id="GO:0008899">
    <property type="term" value="F:homoserine O-succinyltransferase activity"/>
    <property type="evidence" value="ECO:0007669"/>
    <property type="project" value="UniProtKB-UniRule"/>
</dbReference>
<dbReference type="GO" id="GO:0009092">
    <property type="term" value="P:homoserine metabolic process"/>
    <property type="evidence" value="ECO:0007669"/>
    <property type="project" value="TreeGrafter"/>
</dbReference>
<dbReference type="GO" id="GO:0009086">
    <property type="term" value="P:methionine biosynthetic process"/>
    <property type="evidence" value="ECO:0007669"/>
    <property type="project" value="UniProtKB-UniRule"/>
</dbReference>
<dbReference type="FunFam" id="1.10.1740.110:FF:000001">
    <property type="entry name" value="Homoserine O-acetyltransferase"/>
    <property type="match status" value="1"/>
</dbReference>
<dbReference type="Gene3D" id="1.10.1740.110">
    <property type="match status" value="1"/>
</dbReference>
<dbReference type="Gene3D" id="3.40.50.1820">
    <property type="entry name" value="alpha/beta hydrolase"/>
    <property type="match status" value="1"/>
</dbReference>
<dbReference type="HAMAP" id="MF_00296">
    <property type="entry name" value="MetX_acyltransf"/>
    <property type="match status" value="1"/>
</dbReference>
<dbReference type="InterPro" id="IPR000073">
    <property type="entry name" value="AB_hydrolase_1"/>
</dbReference>
<dbReference type="InterPro" id="IPR029058">
    <property type="entry name" value="AB_hydrolase_fold"/>
</dbReference>
<dbReference type="InterPro" id="IPR008220">
    <property type="entry name" value="HAT_MetX-like"/>
</dbReference>
<dbReference type="NCBIfam" id="TIGR01392">
    <property type="entry name" value="homoserO_Ac_trn"/>
    <property type="match status" value="1"/>
</dbReference>
<dbReference type="NCBIfam" id="NF001209">
    <property type="entry name" value="PRK00175.1"/>
    <property type="match status" value="1"/>
</dbReference>
<dbReference type="PANTHER" id="PTHR32268">
    <property type="entry name" value="HOMOSERINE O-ACETYLTRANSFERASE"/>
    <property type="match status" value="1"/>
</dbReference>
<dbReference type="PANTHER" id="PTHR32268:SF11">
    <property type="entry name" value="HOMOSERINE O-ACETYLTRANSFERASE"/>
    <property type="match status" value="1"/>
</dbReference>
<dbReference type="Pfam" id="PF00561">
    <property type="entry name" value="Abhydrolase_1"/>
    <property type="match status" value="1"/>
</dbReference>
<dbReference type="PIRSF" id="PIRSF000443">
    <property type="entry name" value="Homoser_Ac_trans"/>
    <property type="match status" value="1"/>
</dbReference>
<dbReference type="SUPFAM" id="SSF53474">
    <property type="entry name" value="alpha/beta-Hydrolases"/>
    <property type="match status" value="1"/>
</dbReference>
<feature type="chain" id="PRO_1000021900" description="Homoserine O-succinyltransferase">
    <location>
        <begin position="1"/>
        <end position="390"/>
    </location>
</feature>
<feature type="domain" description="AB hydrolase-1" evidence="1">
    <location>
        <begin position="59"/>
        <end position="369"/>
    </location>
</feature>
<feature type="active site" description="Nucleophile" evidence="1">
    <location>
        <position position="165"/>
    </location>
</feature>
<feature type="active site" evidence="1">
    <location>
        <position position="330"/>
    </location>
</feature>
<feature type="active site" evidence="1">
    <location>
        <position position="363"/>
    </location>
</feature>
<feature type="binding site" evidence="1">
    <location>
        <position position="235"/>
    </location>
    <ligand>
        <name>substrate</name>
    </ligand>
</feature>
<feature type="binding site" evidence="1">
    <location>
        <position position="364"/>
    </location>
    <ligand>
        <name>substrate</name>
    </ligand>
</feature>
<feature type="site" description="Important for acyl-CoA specificity" evidence="1">
    <location>
        <position position="332"/>
    </location>
</feature>
<evidence type="ECO:0000255" key="1">
    <source>
        <dbReference type="HAMAP-Rule" id="MF_00296"/>
    </source>
</evidence>
<protein>
    <recommendedName>
        <fullName evidence="1">Homoserine O-succinyltransferase</fullName>
        <shortName evidence="1">HST</shortName>
        <ecNumber evidence="1">2.3.1.46</ecNumber>
    </recommendedName>
    <alternativeName>
        <fullName evidence="1">Homoserine transsuccinylase</fullName>
        <shortName evidence="1">HTS</shortName>
    </alternativeName>
</protein>
<gene>
    <name evidence="1" type="primary">metXS</name>
    <name type="ordered locus">Rmet_0143</name>
</gene>
<name>METXS_CUPMC</name>
<keyword id="KW-0012">Acyltransferase</keyword>
<keyword id="KW-0028">Amino-acid biosynthesis</keyword>
<keyword id="KW-0963">Cytoplasm</keyword>
<keyword id="KW-0486">Methionine biosynthesis</keyword>
<keyword id="KW-1185">Reference proteome</keyword>
<keyword id="KW-0808">Transferase</keyword>
<reference key="1">
    <citation type="journal article" date="2010" name="PLoS ONE">
        <title>The complete genome sequence of Cupriavidus metallidurans strain CH34, a master survivalist in harsh and anthropogenic environments.</title>
        <authorList>
            <person name="Janssen P.J."/>
            <person name="Van Houdt R."/>
            <person name="Moors H."/>
            <person name="Monsieurs P."/>
            <person name="Morin N."/>
            <person name="Michaux A."/>
            <person name="Benotmane M.A."/>
            <person name="Leys N."/>
            <person name="Vallaeys T."/>
            <person name="Lapidus A."/>
            <person name="Monchy S."/>
            <person name="Medigue C."/>
            <person name="Taghavi S."/>
            <person name="McCorkle S."/>
            <person name="Dunn J."/>
            <person name="van der Lelie D."/>
            <person name="Mergeay M."/>
        </authorList>
    </citation>
    <scope>NUCLEOTIDE SEQUENCE [LARGE SCALE GENOMIC DNA]</scope>
    <source>
        <strain>ATCC 43123 / DSM 2839 / NBRC 102507 / CH34</strain>
    </source>
</reference>